<protein>
    <recommendedName>
        <fullName evidence="8 11">DNA-binding transcriptional repressor TubR</fullName>
    </recommendedName>
</protein>
<dbReference type="EMBL" id="AL731825">
    <property type="protein sequence ID" value="CAD30187.1"/>
    <property type="molecule type" value="Genomic_DNA"/>
</dbReference>
<dbReference type="EMBL" id="CP013279">
    <property type="protein sequence ID" value="AND28645.1"/>
    <property type="molecule type" value="Genomic_DNA"/>
</dbReference>
<dbReference type="EMBL" id="KY352353">
    <property type="protein sequence ID" value="ASO64581.1"/>
    <property type="molecule type" value="Genomic_DNA"/>
</dbReference>
<dbReference type="RefSeq" id="WP_001078053.1">
    <property type="nucleotide sequence ID" value="NZ_VEIF01000064.1"/>
</dbReference>
<dbReference type="RefSeq" id="YP_001573871.1">
    <property type="nucleotide sequence ID" value="NC_010076.1"/>
</dbReference>
<dbReference type="PDB" id="3M8E">
    <property type="method" value="X-ray"/>
    <property type="resolution" value="2.00 A"/>
    <property type="chains" value="A/B=1-104"/>
</dbReference>
<dbReference type="PDB" id="3M8F">
    <property type="method" value="X-ray"/>
    <property type="resolution" value="2.80 A"/>
    <property type="chains" value="A/B=1-104"/>
</dbReference>
<dbReference type="PDB" id="3M9A">
    <property type="method" value="X-ray"/>
    <property type="resolution" value="2.50 A"/>
    <property type="chains" value="A=1-104"/>
</dbReference>
<dbReference type="PDB" id="4ASO">
    <property type="method" value="X-ray"/>
    <property type="resolution" value="7.00 A"/>
    <property type="chains" value="A/B/C/D/E/F/G/H/I/J/K/L/M/N/O/P=1-104"/>
</dbReference>
<dbReference type="PDB" id="4ASS">
    <property type="method" value="X-ray"/>
    <property type="resolution" value="7.00 A"/>
    <property type="chains" value="A/B/C/D/E/F/G/H/I=1-104"/>
</dbReference>
<dbReference type="PDBsum" id="3M8E"/>
<dbReference type="PDBsum" id="3M8F"/>
<dbReference type="PDBsum" id="3M9A"/>
<dbReference type="PDBsum" id="4ASO"/>
<dbReference type="PDBsum" id="4ASS"/>
<dbReference type="SMR" id="Q8KNP2"/>
<dbReference type="DIP" id="DIP-59347N"/>
<dbReference type="IntAct" id="Q8KNP2">
    <property type="interactions" value="1"/>
</dbReference>
<dbReference type="EvolutionaryTrace" id="Q8KNP2"/>
<dbReference type="GO" id="GO:0003677">
    <property type="term" value="F:DNA binding"/>
    <property type="evidence" value="ECO:0007669"/>
    <property type="project" value="UniProtKB-KW"/>
</dbReference>
<dbReference type="GO" id="GO:0042802">
    <property type="term" value="F:identical protein binding"/>
    <property type="evidence" value="ECO:0000353"/>
    <property type="project" value="IntAct"/>
</dbReference>
<dbReference type="GO" id="GO:0030541">
    <property type="term" value="P:plasmid partitioning"/>
    <property type="evidence" value="ECO:0007669"/>
    <property type="project" value="UniProtKB-KW"/>
</dbReference>
<dbReference type="FunFam" id="1.10.10.10:FF:000949">
    <property type="entry name" value="Contig184, whole genome shotgun sequence"/>
    <property type="match status" value="1"/>
</dbReference>
<dbReference type="Gene3D" id="1.10.10.10">
    <property type="entry name" value="Winged helix-like DNA-binding domain superfamily/Winged helix DNA-binding domain"/>
    <property type="match status" value="1"/>
</dbReference>
<dbReference type="InterPro" id="IPR036388">
    <property type="entry name" value="WH-like_DNA-bd_sf"/>
</dbReference>
<dbReference type="InterPro" id="IPR036390">
    <property type="entry name" value="WH_DNA-bd_sf"/>
</dbReference>
<dbReference type="SUPFAM" id="SSF46785">
    <property type="entry name" value="Winged helix' DNA-binding domain"/>
    <property type="match status" value="1"/>
</dbReference>
<evidence type="ECO:0000269" key="1">
    <source>
    </source>
</evidence>
<evidence type="ECO:0000269" key="2">
    <source>
    </source>
</evidence>
<evidence type="ECO:0000269" key="3">
    <source>
    </source>
</evidence>
<evidence type="ECO:0000269" key="4">
    <source>
    </source>
</evidence>
<evidence type="ECO:0000269" key="5">
    <source>
    </source>
</evidence>
<evidence type="ECO:0000269" key="6">
    <source>
    </source>
</evidence>
<evidence type="ECO:0000303" key="7">
    <source>
    </source>
</evidence>
<evidence type="ECO:0000303" key="8">
    <source>
    </source>
</evidence>
<evidence type="ECO:0000303" key="9">
    <source>
    </source>
</evidence>
<evidence type="ECO:0000303" key="10">
    <source ref="3"/>
</evidence>
<evidence type="ECO:0000305" key="11"/>
<evidence type="ECO:0000305" key="12">
    <source>
    </source>
</evidence>
<evidence type="ECO:0000305" key="13">
    <source>
    </source>
</evidence>
<evidence type="ECO:0000305" key="14">
    <source>
    </source>
</evidence>
<evidence type="ECO:0007744" key="15">
    <source>
        <dbReference type="PDB" id="3M8E"/>
    </source>
</evidence>
<evidence type="ECO:0007744" key="16">
    <source>
        <dbReference type="PDB" id="3M8F"/>
    </source>
</evidence>
<evidence type="ECO:0007744" key="17">
    <source>
        <dbReference type="PDB" id="3M9A"/>
    </source>
</evidence>
<evidence type="ECO:0007744" key="18">
    <source>
        <dbReference type="PDB" id="4ASO"/>
    </source>
</evidence>
<evidence type="ECO:0007744" key="19">
    <source>
        <dbReference type="PDB" id="4ASS"/>
    </source>
</evidence>
<evidence type="ECO:0007829" key="20">
    <source>
        <dbReference type="PDB" id="3M8E"/>
    </source>
</evidence>
<gene>
    <name evidence="8" type="primary">tubR</name>
    <name type="synonym">pBt157</name>
    <name type="ORF">ATN07_33545</name>
</gene>
<organism>
    <name type="scientific">Bacillus thuringiensis subsp. israelensis</name>
    <dbReference type="NCBI Taxonomy" id="1430"/>
    <lineage>
        <taxon>Bacteria</taxon>
        <taxon>Bacillati</taxon>
        <taxon>Bacillota</taxon>
        <taxon>Bacilli</taxon>
        <taxon>Bacillales</taxon>
        <taxon>Bacillaceae</taxon>
        <taxon>Bacillus</taxon>
        <taxon>Bacillus cereus group</taxon>
    </lineage>
</organism>
<sequence>MNRDHFYTLNIAEIAERIGNDDCAYQVLMAFINENGEAQMLNKTAVAEMIQLSKPTVFATVNSFYCAGYIDETRVGRSKIYTLSDLGVEIVECFKQKAMEMRNL</sequence>
<keyword id="KW-0002">3D-structure</keyword>
<keyword id="KW-0238">DNA-binding</keyword>
<keyword id="KW-0614">Plasmid</keyword>
<keyword id="KW-0616">Plasmid partition</keyword>
<keyword id="KW-0678">Repressor</keyword>
<keyword id="KW-0804">Transcription</keyword>
<keyword id="KW-0805">Transcription regulation</keyword>
<comment type="function">
    <text evidence="1 3 4 5 6 14">A DNA-binding protein that is part of the type III plasmid partition system used to ensure correct segregation of the pBtoxis plasmid. Cooperatively binds to the centromere-like site (tubC), which may seed filament formation by the TubZ polymerizing GTPase, stabilizing TubZ filaments. TubR-tubC complexes track the depolymerizing minus end of the filament, probably pulling plasmid within the cell (PubMed:20534443, PubMed:23010931, PubMed:25825718). Required for plasmid replication (PubMed:16936050, PubMed:17873046). Negatively regulates levels of TubZ; its effect on RNA expression has not been shown (Probable). Specifically binds iterons, 12-bp imperfect direct repeats that function as a plasmid origin of replication (PubMed:17873046, PubMed:23010931, PubMed:25825718). Four TubR dimers bind to tubC, forming an extended bent DNA-protein filament with protein wrapping helically around the outside of the DNA (PubMed:20534443, PubMed:23010931).</text>
</comment>
<comment type="subunit">
    <text evidence="3 4 5">Homodimer (PubMed:20534443, PubMed:23010931). Binds to tubC DNA, the TubR-DNA complex binds to TubZ (PubMed:17873046, PubMed:20534443).</text>
</comment>
<comment type="interaction">
    <interactant intactId="EBI-15857953">
        <id>Q8KNP2</id>
    </interactant>
    <interactant intactId="EBI-15857953">
        <id>Q8KNP2</id>
        <label>tubR</label>
    </interactant>
    <organismsDiffer>false</organismsDiffer>
    <experiments>2</experiments>
</comment>
<comment type="induction">
    <text evidence="13 14">Probably part of the tubR-tubZ operon.</text>
</comment>
<comment type="domain">
    <text evidence="11">Although this has the same function as TubR of B.cereus strain ATCC 10987 there is little sequence homology and the dimerization interface is different.</text>
</comment>
<comment type="disruption phenotype">
    <text evidence="1 2 3">Loss of plasmid replication (PubMed:16936050, PubMed:17873046). TubZ levels increase, TubZ still polymerizes (PubMed:17510284).</text>
</comment>
<comment type="biotechnology">
    <text evidence="1">A miniplasmid containing this and downstream gene tubZ is able to replicate in B.thuringiensis subsp. israelensis and express insect toxin proteins. The miniplasmid could be used to make plasmids for insect toxin overexpression.</text>
</comment>
<comment type="miscellaneous">
    <text evidence="12">The pBtoxis plasmid encodes all the major endotoxin proteins (Cyt1Aa, Cry4Aa, Cry4Ba, and Cry11Aa) responsible for the mosquito larvicidal activity of strain 4Q2.</text>
</comment>
<accession>Q8KNP2</accession>
<proteinExistence type="evidence at protein level"/>
<reference key="1">
    <citation type="journal article" date="2002" name="Appl. Environ. Microbiol.">
        <title>Complete sequence and organization of pBtoxis, the toxin-coding plasmid of Bacillus thuringiensis subsp. israelensis.</title>
        <authorList>
            <person name="Berry C."/>
            <person name="O'Niel S."/>
            <person name="Ben-Dov E."/>
            <person name="Jones A.F."/>
            <person name="Murphy L."/>
            <person name="Quail M.A."/>
            <person name="Harris D."/>
            <person name="Zaritsky A."/>
            <person name="Parkhill J."/>
        </authorList>
    </citation>
    <scope>NUCLEOTIDE SEQUENCE [GENOMIC DNA]</scope>
    <source>
        <strain>4Q2-72 / 4Q5</strain>
        <plasmid>pBtoxis</plasmid>
    </source>
</reference>
<reference key="2">
    <citation type="journal article" date="2017" name="Res. Microbiol.">
        <title>Comparative genomics of extrachromosomal elements in Bacillus thuringiensis subsp. israelensis.</title>
        <authorList>
            <person name="Bolotin A."/>
            <person name="Gillis A."/>
            <person name="Sanchis V."/>
            <person name="Nielsen-LeRoux C."/>
            <person name="Mahillon J."/>
            <person name="Lereclus D."/>
            <person name="Sorokin A."/>
        </authorList>
    </citation>
    <scope>NUCLEOTIDE SEQUENCE [GENOMIC DNA]</scope>
    <source>
        <strain>AM65-52</strain>
        <plasmid>pAM65-52-4-128K</plasmid>
    </source>
</reference>
<reference key="3">
    <citation type="submission" date="2016-12" db="EMBL/GenBank/DDBJ databases">
        <title>Bacillus turingiensis from Tocantins.</title>
        <authorList>
            <person name="Alves G.B."/>
            <person name="Melo F.L."/>
            <person name="Campos F.S."/>
            <person name="Correa R.F.T."/>
            <person name="Ribeiro B.M."/>
            <person name="Aguiar R.W.S."/>
        </authorList>
    </citation>
    <scope>NUCLEOTIDE SEQUENCE [GENOMIC DNA]</scope>
    <source>
        <strain>1.24</strain>
        <plasmid>pT0124-4</plasmid>
    </source>
</reference>
<reference key="4">
    <citation type="journal article" date="2006" name="Appl. Environ. Microbiol.">
        <title>Minireplicon from pBtoxis of Bacillus thuringiensis subsp. israelensis.</title>
        <authorList>
            <person name="Tang M."/>
            <person name="Bideshi D.K."/>
            <person name="Park H.W."/>
            <person name="Federici B.A."/>
        </authorList>
    </citation>
    <scope>FUNCTION</scope>
    <scope>PROBABLE OPERON</scope>
    <scope>DISRUPTION PHENOTYPE</scope>
    <scope>BIOTECHNOLOGY</scope>
    <source>
        <strain>4Q5</strain>
        <plasmid>pBtoxis</plasmid>
    </source>
</reference>
<reference key="5">
    <citation type="journal article" date="2007" name="Genes Dev.">
        <title>Treadmilling of a prokaryotic tubulin-like protein, TubZ, required for plasmid stability in Bacillus thuringiensis.</title>
        <authorList>
            <person name="Larsen R.A."/>
            <person name="Cusumano C."/>
            <person name="Fujioka A."/>
            <person name="Lim-Fong G."/>
            <person name="Patterson P."/>
            <person name="Pogliano J."/>
        </authorList>
    </citation>
    <scope>FUNCTION</scope>
    <scope>PROBABLE OPERON</scope>
    <scope>DISRUPTION PHENOTYPE</scope>
    <source>
        <strain>ATCC 35646 / USDA HD522</strain>
        <plasmid>pBtoxis</plasmid>
    </source>
</reference>
<reference key="6">
    <citation type="journal article" date="2007" name="J. Bacteriol.">
        <title>Iteron-binding ORF157 and FtsZ-like ORF156 proteins encoded by pBtoxis play a role in its replication in Bacillus thuringiensis subsp. israelensis.</title>
        <authorList>
            <person name="Tang M."/>
            <person name="Bideshi D.K."/>
            <person name="Park H.W."/>
            <person name="Federici B.A."/>
        </authorList>
    </citation>
    <scope>FUNCTION</scope>
    <scope>INTERACTION WITH TUBZ</scope>
    <scope>SUBUNIT</scope>
    <scope>DISRUPTION PHENOTYPE</scope>
    <scope>DNA-BINDING</scope>
    <source>
        <strain>4Q5</strain>
        <plasmid>pBtoxis</plasmid>
    </source>
</reference>
<reference key="7">
    <citation type="journal article" date="2015" name="Proc. Natl. Acad. Sci. U.S.A.">
        <title>Reconstitution of a prokaryotic minus end-tracking system using TubRC centromeric complexes and tubulin-like protein TubZ filaments.</title>
        <authorList>
            <person name="Fink G."/>
            <person name="Loewe J."/>
        </authorList>
    </citation>
    <scope>FUNCTION</scope>
    <scope>SUBUNIT</scope>
    <scope>DNA-BINDING</scope>
    <source>
        <plasmid>pBtoxis</plasmid>
    </source>
</reference>
<reference evidence="15 16 17" key="8">
    <citation type="journal article" date="2010" name="Proc. Natl. Acad. Sci. U.S.A.">
        <title>Plasmid protein TubR uses a distinct mode of HTH-DNA binding and recruits the prokaryotic tubulin homolog TubZ to effect DNA partition.</title>
        <authorList>
            <person name="Ni L."/>
            <person name="Xu W."/>
            <person name="Kumaraswami M."/>
            <person name="Schumacher M.A."/>
        </authorList>
    </citation>
    <scope>X-RAY CRYSTALLOGRAPHY (2.00 ANGSTROMS)</scope>
    <scope>FUNCTION</scope>
    <scope>SUBUNIT</scope>
    <scope>MUTAGENESIS OF LYS-43; SER-63; ALA-67; ARG-74; ARG-77 AND LYS-79</scope>
    <scope>DNA-BINDING</scope>
    <source>
        <plasmid>pBtoxis</plasmid>
    </source>
</reference>
<reference evidence="18 19" key="9">
    <citation type="journal article" date="2012" name="Proc. Natl. Acad. Sci. U.S.A.">
        <title>Superstructure of the centromeric complex of TubZRC plasmid partitioning systems.</title>
        <authorList>
            <person name="Aylett C.H."/>
            <person name="Lowe J."/>
        </authorList>
    </citation>
    <scope>X-RAY CRYSTALLOGRAPHY (7.00 ANGSTROMS) IN COMPLEX WITH DNA</scope>
    <scope>SUBUNIT</scope>
    <scope>DNA-BINDING</scope>
</reference>
<name>TUBR_BACTI</name>
<geneLocation type="plasmid" evidence="9">
    <name>pAM65-52-4-128K</name>
</geneLocation>
<geneLocation type="plasmid" evidence="7">
    <name>pBtoxis</name>
</geneLocation>
<geneLocation type="plasmid" evidence="10">
    <name>pT0124-4</name>
</geneLocation>
<feature type="chain" id="PRO_0000448567" description="DNA-binding transcriptional repressor TubR">
    <location>
        <begin position="1"/>
        <end position="104"/>
    </location>
</feature>
<feature type="DNA-binding region" description="HTH" evidence="13">
    <location>
        <begin position="43"/>
        <end position="50"/>
    </location>
</feature>
<feature type="DNA-binding region" description="HTH" evidence="13">
    <location>
        <begin position="54"/>
        <end position="65"/>
    </location>
</feature>
<feature type="mutagenesis site" description="No DNA binding." evidence="4">
    <original>K</original>
    <variation>A</variation>
    <location>
        <position position="43"/>
    </location>
</feature>
<feature type="mutagenesis site" description="No longer dimerizes, decreased DNA-binding." evidence="4">
    <original>S</original>
    <variation>R</variation>
    <location>
        <position position="63"/>
    </location>
</feature>
<feature type="mutagenesis site" description="Dimerizes, decreased DNA binding." evidence="4">
    <original>S</original>
    <variation>W</variation>
    <location>
        <position position="63"/>
    </location>
</feature>
<feature type="mutagenesis site" description="No longer dimerizes, decreased DNA binding." evidence="4">
    <original>A</original>
    <variation>R</variation>
    <location>
        <position position="67"/>
    </location>
</feature>
<feature type="mutagenesis site" description="Dimerizes, decreased DNA binding." evidence="4">
    <original>A</original>
    <variation>W</variation>
    <location>
        <position position="67"/>
    </location>
</feature>
<feature type="mutagenesis site" description="No DNA binding." evidence="4">
    <original>R</original>
    <variation>A</variation>
    <location>
        <position position="74"/>
    </location>
</feature>
<feature type="mutagenesis site" description="No DNA binding." evidence="4">
    <original>R</original>
    <variation>A</variation>
    <location>
        <position position="77"/>
    </location>
</feature>
<feature type="mutagenesis site" description="Decreased DNA binding." evidence="4">
    <original>K</original>
    <variation>A</variation>
    <location>
        <position position="79"/>
    </location>
</feature>
<feature type="strand" evidence="20">
    <location>
        <begin position="7"/>
        <end position="10"/>
    </location>
</feature>
<feature type="helix" evidence="20">
    <location>
        <begin position="11"/>
        <end position="19"/>
    </location>
</feature>
<feature type="helix" evidence="20">
    <location>
        <begin position="22"/>
        <end position="30"/>
    </location>
</feature>
<feature type="helix" evidence="20">
    <location>
        <begin position="43"/>
        <end position="48"/>
    </location>
</feature>
<feature type="strand" evidence="20">
    <location>
        <begin position="50"/>
        <end position="52"/>
    </location>
</feature>
<feature type="helix" evidence="20">
    <location>
        <begin position="54"/>
        <end position="66"/>
    </location>
</feature>
<feature type="strand" evidence="20">
    <location>
        <begin position="69"/>
        <end position="75"/>
    </location>
</feature>
<feature type="strand" evidence="20">
    <location>
        <begin position="78"/>
        <end position="83"/>
    </location>
</feature>
<feature type="helix" evidence="20">
    <location>
        <begin position="85"/>
        <end position="92"/>
    </location>
</feature>
<feature type="turn" evidence="20">
    <location>
        <begin position="93"/>
        <end position="96"/>
    </location>
</feature>